<protein>
    <recommendedName>
        <fullName evidence="1">Translation initiation factor 6</fullName>
        <shortName evidence="1">aIF-6</shortName>
    </recommendedName>
</protein>
<name>IF6_METPE</name>
<organism>
    <name type="scientific">Methanosphaerula palustris (strain ATCC BAA-1556 / DSM 19958 / E1-9c)</name>
    <dbReference type="NCBI Taxonomy" id="521011"/>
    <lineage>
        <taxon>Archaea</taxon>
        <taxon>Methanobacteriati</taxon>
        <taxon>Methanobacteriota</taxon>
        <taxon>Stenosarchaea group</taxon>
        <taxon>Methanomicrobia</taxon>
        <taxon>Methanomicrobiales</taxon>
        <taxon>Methanoregulaceae</taxon>
        <taxon>Methanosphaerula</taxon>
    </lineage>
</organism>
<dbReference type="EMBL" id="CP001338">
    <property type="protein sequence ID" value="ACL15913.1"/>
    <property type="molecule type" value="Genomic_DNA"/>
</dbReference>
<dbReference type="RefSeq" id="WP_012617232.1">
    <property type="nucleotide sequence ID" value="NC_011832.1"/>
</dbReference>
<dbReference type="SMR" id="B8GEU6"/>
<dbReference type="STRING" id="521011.Mpal_0540"/>
<dbReference type="GeneID" id="7271956"/>
<dbReference type="KEGG" id="mpl:Mpal_0540"/>
<dbReference type="eggNOG" id="arCOG04176">
    <property type="taxonomic scope" value="Archaea"/>
</dbReference>
<dbReference type="HOGENOM" id="CLU_071894_1_0_2"/>
<dbReference type="OrthoDB" id="33582at2157"/>
<dbReference type="Proteomes" id="UP000002457">
    <property type="component" value="Chromosome"/>
</dbReference>
<dbReference type="GO" id="GO:0043022">
    <property type="term" value="F:ribosome binding"/>
    <property type="evidence" value="ECO:0007669"/>
    <property type="project" value="InterPro"/>
</dbReference>
<dbReference type="GO" id="GO:0003743">
    <property type="term" value="F:translation initiation factor activity"/>
    <property type="evidence" value="ECO:0007669"/>
    <property type="project" value="UniProtKB-UniRule"/>
</dbReference>
<dbReference type="GO" id="GO:0042256">
    <property type="term" value="P:cytosolic ribosome assembly"/>
    <property type="evidence" value="ECO:0007669"/>
    <property type="project" value="InterPro"/>
</dbReference>
<dbReference type="Gene3D" id="3.75.10.10">
    <property type="entry name" value="L-arginine/glycine Amidinotransferase, Chain A"/>
    <property type="match status" value="1"/>
</dbReference>
<dbReference type="HAMAP" id="MF_00032">
    <property type="entry name" value="eIF_6"/>
    <property type="match status" value="1"/>
</dbReference>
<dbReference type="InterPro" id="IPR002769">
    <property type="entry name" value="eIF6"/>
</dbReference>
<dbReference type="NCBIfam" id="TIGR00323">
    <property type="entry name" value="eIF-6"/>
    <property type="match status" value="1"/>
</dbReference>
<dbReference type="NCBIfam" id="NF003132">
    <property type="entry name" value="PRK04046.2-4"/>
    <property type="match status" value="1"/>
</dbReference>
<dbReference type="PANTHER" id="PTHR10784">
    <property type="entry name" value="TRANSLATION INITIATION FACTOR 6"/>
    <property type="match status" value="1"/>
</dbReference>
<dbReference type="Pfam" id="PF01912">
    <property type="entry name" value="eIF-6"/>
    <property type="match status" value="1"/>
</dbReference>
<dbReference type="PIRSF" id="PIRSF006413">
    <property type="entry name" value="IF-6"/>
    <property type="match status" value="1"/>
</dbReference>
<dbReference type="SMART" id="SM00654">
    <property type="entry name" value="eIF6"/>
    <property type="match status" value="1"/>
</dbReference>
<dbReference type="SUPFAM" id="SSF55909">
    <property type="entry name" value="Pentein"/>
    <property type="match status" value="1"/>
</dbReference>
<comment type="function">
    <text evidence="1">Binds to the 50S ribosomal subunit and prevents its association with the 30S ribosomal subunit to form the 70S initiation complex.</text>
</comment>
<comment type="similarity">
    <text evidence="1">Belongs to the eIF-6 family.</text>
</comment>
<sequence>MIRTLAYEGDPHIGIFTRVLEDIAVVPPEASADYCAALKEALGVTLVKTHVQGSSIIGSLVSGNSRGAIVSGLAYPDEIRAIEEYREVMLLEGSMNAAGNVILANDQMAAVHPDMDNATIEQIHSVLGVPVIRLTLSGIKTVGMAGYATNRGILVHARSAGRELATLESTTDLPVGTGTINMGSGLVGTGLLANSTGYLAGIETSGFEMGRIADVFGFVEG</sequence>
<feature type="chain" id="PRO_1000116997" description="Translation initiation factor 6">
    <location>
        <begin position="1"/>
        <end position="221"/>
    </location>
</feature>
<keyword id="KW-0396">Initiation factor</keyword>
<keyword id="KW-0648">Protein biosynthesis</keyword>
<keyword id="KW-1185">Reference proteome</keyword>
<gene>
    <name evidence="1" type="primary">eif6</name>
    <name type="ordered locus">Mpal_0540</name>
</gene>
<reference key="1">
    <citation type="journal article" date="2015" name="Genome Announc.">
        <title>Complete Genome Sequence of Methanosphaerula palustris E1-9CT, a Hydrogenotrophic Methanogen Isolated from a Minerotrophic Fen Peatland.</title>
        <authorList>
            <person name="Cadillo-Quiroz H."/>
            <person name="Browne P."/>
            <person name="Kyrpides N."/>
            <person name="Woyke T."/>
            <person name="Goodwin L."/>
            <person name="Detter C."/>
            <person name="Yavitt J.B."/>
            <person name="Zinder S.H."/>
        </authorList>
    </citation>
    <scope>NUCLEOTIDE SEQUENCE [LARGE SCALE GENOMIC DNA]</scope>
    <source>
        <strain>ATCC BAA-1556 / DSM 19958 / E1-9c</strain>
    </source>
</reference>
<proteinExistence type="inferred from homology"/>
<evidence type="ECO:0000255" key="1">
    <source>
        <dbReference type="HAMAP-Rule" id="MF_00032"/>
    </source>
</evidence>
<accession>B8GEU6</accession>